<protein>
    <recommendedName>
        <fullName evidence="1">UPF0283 membrane protein YcjF</fullName>
    </recommendedName>
</protein>
<keyword id="KW-0997">Cell inner membrane</keyword>
<keyword id="KW-1003">Cell membrane</keyword>
<keyword id="KW-0472">Membrane</keyword>
<keyword id="KW-0812">Transmembrane</keyword>
<keyword id="KW-1133">Transmembrane helix</keyword>
<comment type="subcellular location">
    <subcellularLocation>
        <location evidence="1">Cell inner membrane</location>
        <topology evidence="1">Multi-pass membrane protein</topology>
    </subcellularLocation>
</comment>
<comment type="similarity">
    <text evidence="1">Belongs to the UPF0283 family.</text>
</comment>
<proteinExistence type="inferred from homology"/>
<name>YCJF_ECOLC</name>
<reference key="1">
    <citation type="submission" date="2008-02" db="EMBL/GenBank/DDBJ databases">
        <title>Complete sequence of Escherichia coli C str. ATCC 8739.</title>
        <authorList>
            <person name="Copeland A."/>
            <person name="Lucas S."/>
            <person name="Lapidus A."/>
            <person name="Glavina del Rio T."/>
            <person name="Dalin E."/>
            <person name="Tice H."/>
            <person name="Bruce D."/>
            <person name="Goodwin L."/>
            <person name="Pitluck S."/>
            <person name="Kiss H."/>
            <person name="Brettin T."/>
            <person name="Detter J.C."/>
            <person name="Han C."/>
            <person name="Kuske C.R."/>
            <person name="Schmutz J."/>
            <person name="Larimer F."/>
            <person name="Land M."/>
            <person name="Hauser L."/>
            <person name="Kyrpides N."/>
            <person name="Mikhailova N."/>
            <person name="Ingram L."/>
            <person name="Richardson P."/>
        </authorList>
    </citation>
    <scope>NUCLEOTIDE SEQUENCE [LARGE SCALE GENOMIC DNA]</scope>
    <source>
        <strain>ATCC 8739 / DSM 1576 / NBRC 3972 / NCIMB 8545 / WDCM 00012 / Crooks</strain>
    </source>
</reference>
<accession>B1IST8</accession>
<feature type="chain" id="PRO_1000084779" description="UPF0283 membrane protein YcjF">
    <location>
        <begin position="1"/>
        <end position="353"/>
    </location>
</feature>
<feature type="transmembrane region" description="Helical" evidence="1">
    <location>
        <begin position="70"/>
        <end position="90"/>
    </location>
</feature>
<feature type="transmembrane region" description="Helical" evidence="1">
    <location>
        <begin position="100"/>
        <end position="120"/>
    </location>
</feature>
<feature type="transmembrane region" description="Helical" evidence="1">
    <location>
        <begin position="213"/>
        <end position="233"/>
    </location>
</feature>
<gene>
    <name evidence="1" type="primary">ycjF</name>
    <name type="ordered locus">EcolC_2303</name>
</gene>
<organism>
    <name type="scientific">Escherichia coli (strain ATCC 8739 / DSM 1576 / NBRC 3972 / NCIMB 8545 / WDCM 00012 / Crooks)</name>
    <dbReference type="NCBI Taxonomy" id="481805"/>
    <lineage>
        <taxon>Bacteria</taxon>
        <taxon>Pseudomonadati</taxon>
        <taxon>Pseudomonadota</taxon>
        <taxon>Gammaproteobacteria</taxon>
        <taxon>Enterobacterales</taxon>
        <taxon>Enterobacteriaceae</taxon>
        <taxon>Escherichia</taxon>
    </lineage>
</organism>
<dbReference type="EMBL" id="CP000946">
    <property type="protein sequence ID" value="ACA77938.1"/>
    <property type="molecule type" value="Genomic_DNA"/>
</dbReference>
<dbReference type="RefSeq" id="WP_000138728.1">
    <property type="nucleotide sequence ID" value="NZ_MTFT01000016.1"/>
</dbReference>
<dbReference type="SMR" id="B1IST8"/>
<dbReference type="KEGG" id="ecl:EcolC_2303"/>
<dbReference type="HOGENOM" id="CLU_057693_2_0_6"/>
<dbReference type="GO" id="GO:0005886">
    <property type="term" value="C:plasma membrane"/>
    <property type="evidence" value="ECO:0007669"/>
    <property type="project" value="UniProtKB-SubCell"/>
</dbReference>
<dbReference type="HAMAP" id="MF_01085">
    <property type="entry name" value="UPF0283"/>
    <property type="match status" value="1"/>
</dbReference>
<dbReference type="InterPro" id="IPR021147">
    <property type="entry name" value="DUF697"/>
</dbReference>
<dbReference type="InterPro" id="IPR006507">
    <property type="entry name" value="UPF0283"/>
</dbReference>
<dbReference type="NCBIfam" id="TIGR01620">
    <property type="entry name" value="hyp_HI0043"/>
    <property type="match status" value="1"/>
</dbReference>
<dbReference type="PANTHER" id="PTHR39342">
    <property type="entry name" value="UPF0283 MEMBRANE PROTEIN YCJF"/>
    <property type="match status" value="1"/>
</dbReference>
<dbReference type="PANTHER" id="PTHR39342:SF1">
    <property type="entry name" value="UPF0283 MEMBRANE PROTEIN YCJF"/>
    <property type="match status" value="1"/>
</dbReference>
<dbReference type="Pfam" id="PF05128">
    <property type="entry name" value="DUF697"/>
    <property type="match status" value="1"/>
</dbReference>
<evidence type="ECO:0000255" key="1">
    <source>
        <dbReference type="HAMAP-Rule" id="MF_01085"/>
    </source>
</evidence>
<sequence length="353" mass="39392">MTEPLKPRIDFDGPLEVDQNPKFRAQQTFDENQAQNFAPATLDEAQEEEGQVEAVMDAALRPKRSLWRKMVMGGLALFGASVVGQGVQWTMNAWQTQDWVALGGCAAGALIIGAGVGSVVTEWRRLWRLRQRAHERDEARDLLHSHGTGKGRAFCEKLAQQAGIDQSHPALQRWYASIHETQNDREVVSLYAHLVQPVLDAQARREISRSAAESTLMIAVSPLALVDMAFIAWRNLRLINRIATLYGIELGYYSRLRLFKLVLLNIAFAGASELVREVGMDWMSQDLAARLSTRAAQGIGAGLLTARLGIKAMELCRPLPWIDDDKPRLGDFRRQLIGQVKETLQKGKTPSEK</sequence>